<evidence type="ECO:0000255" key="1">
    <source>
        <dbReference type="HAMAP-Rule" id="MF_00385"/>
    </source>
</evidence>
<evidence type="ECO:0000256" key="2">
    <source>
        <dbReference type="SAM" id="MobiDB-lite"/>
    </source>
</evidence>
<evidence type="ECO:0000305" key="3"/>
<proteinExistence type="inferred from homology"/>
<organism>
    <name type="scientific">Rhodopseudomonas palustris (strain BisA53)</name>
    <dbReference type="NCBI Taxonomy" id="316055"/>
    <lineage>
        <taxon>Bacteria</taxon>
        <taxon>Pseudomonadati</taxon>
        <taxon>Pseudomonadota</taxon>
        <taxon>Alphaproteobacteria</taxon>
        <taxon>Hyphomicrobiales</taxon>
        <taxon>Nitrobacteraceae</taxon>
        <taxon>Rhodopseudomonas</taxon>
    </lineage>
</organism>
<protein>
    <recommendedName>
        <fullName evidence="1">Small ribosomal subunit protein bS16</fullName>
    </recommendedName>
    <alternativeName>
        <fullName evidence="3">30S ribosomal protein S16</fullName>
    </alternativeName>
</protein>
<gene>
    <name evidence="1" type="primary">rpsP</name>
    <name type="ordered locus">RPE_0328</name>
</gene>
<accession>Q07UU7</accession>
<name>RS16_RHOP5</name>
<reference key="1">
    <citation type="submission" date="2006-09" db="EMBL/GenBank/DDBJ databases">
        <title>Complete sequence of Rhodopseudomonas palustris BisA53.</title>
        <authorList>
            <consortium name="US DOE Joint Genome Institute"/>
            <person name="Copeland A."/>
            <person name="Lucas S."/>
            <person name="Lapidus A."/>
            <person name="Barry K."/>
            <person name="Detter J.C."/>
            <person name="Glavina del Rio T."/>
            <person name="Hammon N."/>
            <person name="Israni S."/>
            <person name="Dalin E."/>
            <person name="Tice H."/>
            <person name="Pitluck S."/>
            <person name="Chain P."/>
            <person name="Malfatti S."/>
            <person name="Shin M."/>
            <person name="Vergez L."/>
            <person name="Schmutz J."/>
            <person name="Larimer F."/>
            <person name="Land M."/>
            <person name="Hauser L."/>
            <person name="Pelletier D.A."/>
            <person name="Kyrpides N."/>
            <person name="Kim E."/>
            <person name="Harwood C.S."/>
            <person name="Oda Y."/>
            <person name="Richardson P."/>
        </authorList>
    </citation>
    <scope>NUCLEOTIDE SEQUENCE [LARGE SCALE GENOMIC DNA]</scope>
    <source>
        <strain>BisA53</strain>
    </source>
</reference>
<feature type="chain" id="PRO_1000049328" description="Small ribosomal subunit protein bS16">
    <location>
        <begin position="1"/>
        <end position="110"/>
    </location>
</feature>
<feature type="region of interest" description="Disordered" evidence="2">
    <location>
        <begin position="87"/>
        <end position="110"/>
    </location>
</feature>
<comment type="similarity">
    <text evidence="1">Belongs to the bacterial ribosomal protein bS16 family.</text>
</comment>
<dbReference type="EMBL" id="CP000463">
    <property type="protein sequence ID" value="ABJ04287.1"/>
    <property type="molecule type" value="Genomic_DNA"/>
</dbReference>
<dbReference type="SMR" id="Q07UU7"/>
<dbReference type="STRING" id="316055.RPE_0328"/>
<dbReference type="KEGG" id="rpe:RPE_0328"/>
<dbReference type="eggNOG" id="COG0228">
    <property type="taxonomic scope" value="Bacteria"/>
</dbReference>
<dbReference type="HOGENOM" id="CLU_100590_3_1_5"/>
<dbReference type="OrthoDB" id="9807878at2"/>
<dbReference type="GO" id="GO:0005737">
    <property type="term" value="C:cytoplasm"/>
    <property type="evidence" value="ECO:0007669"/>
    <property type="project" value="UniProtKB-ARBA"/>
</dbReference>
<dbReference type="GO" id="GO:0015935">
    <property type="term" value="C:small ribosomal subunit"/>
    <property type="evidence" value="ECO:0007669"/>
    <property type="project" value="TreeGrafter"/>
</dbReference>
<dbReference type="GO" id="GO:0003735">
    <property type="term" value="F:structural constituent of ribosome"/>
    <property type="evidence" value="ECO:0007669"/>
    <property type="project" value="InterPro"/>
</dbReference>
<dbReference type="GO" id="GO:0006412">
    <property type="term" value="P:translation"/>
    <property type="evidence" value="ECO:0007669"/>
    <property type="project" value="UniProtKB-UniRule"/>
</dbReference>
<dbReference type="FunFam" id="3.30.1320.10:FF:000008">
    <property type="entry name" value="30S ribosomal protein S16"/>
    <property type="match status" value="1"/>
</dbReference>
<dbReference type="Gene3D" id="3.30.1320.10">
    <property type="match status" value="1"/>
</dbReference>
<dbReference type="HAMAP" id="MF_00385">
    <property type="entry name" value="Ribosomal_bS16"/>
    <property type="match status" value="1"/>
</dbReference>
<dbReference type="InterPro" id="IPR000307">
    <property type="entry name" value="Ribosomal_bS16"/>
</dbReference>
<dbReference type="InterPro" id="IPR023803">
    <property type="entry name" value="Ribosomal_bS16_dom_sf"/>
</dbReference>
<dbReference type="NCBIfam" id="TIGR00002">
    <property type="entry name" value="S16"/>
    <property type="match status" value="1"/>
</dbReference>
<dbReference type="PANTHER" id="PTHR12919">
    <property type="entry name" value="30S RIBOSOMAL PROTEIN S16"/>
    <property type="match status" value="1"/>
</dbReference>
<dbReference type="PANTHER" id="PTHR12919:SF20">
    <property type="entry name" value="SMALL RIBOSOMAL SUBUNIT PROTEIN BS16M"/>
    <property type="match status" value="1"/>
</dbReference>
<dbReference type="Pfam" id="PF00886">
    <property type="entry name" value="Ribosomal_S16"/>
    <property type="match status" value="1"/>
</dbReference>
<dbReference type="SUPFAM" id="SSF54565">
    <property type="entry name" value="Ribosomal protein S16"/>
    <property type="match status" value="1"/>
</dbReference>
<sequence>MSVVIRLARAGTKKRPVYHVVVADSRFPRDGRFIERLGHFNPLLPKDNEARLKLDLDKVKAWVAKGAQPSDRVARFLDAAGVMKREARNNPEKAVPRKERKAAAEAAAKK</sequence>
<keyword id="KW-0687">Ribonucleoprotein</keyword>
<keyword id="KW-0689">Ribosomal protein</keyword>